<reference key="1">
    <citation type="journal article" date="1999" name="Nature">
        <title>A protein kinase encoded by the t complex responder gene causes non-Mendelian inheritance.</title>
        <authorList>
            <person name="Herrmann B.G."/>
            <person name="Koschorz B."/>
            <person name="Wertz K."/>
            <person name="McLaughlin K.J."/>
            <person name="Kispert A."/>
        </authorList>
    </citation>
    <scope>NUCLEOTIDE SEQUENCE [GENOMIC DNA]</scope>
    <scope>TISSUE SPECIFICITY</scope>
    <scope>FUNCTION</scope>
    <source>
        <tissue>Testis</tissue>
    </source>
</reference>
<dbReference type="EC" id="2.7.11.1"/>
<dbReference type="EMBL" id="AJ245452">
    <property type="protein sequence ID" value="CAB61340.1"/>
    <property type="molecule type" value="mRNA"/>
</dbReference>
<dbReference type="SMR" id="A2KF29"/>
<dbReference type="FunCoup" id="A2KF29">
    <property type="interactions" value="47"/>
</dbReference>
<dbReference type="InParanoid" id="A2KF29"/>
<dbReference type="PRO" id="PR:A2KF29"/>
<dbReference type="Proteomes" id="UP000000589">
    <property type="component" value="Unplaced"/>
</dbReference>
<dbReference type="RNAct" id="A2KF29">
    <property type="molecule type" value="protein"/>
</dbReference>
<dbReference type="GO" id="GO:0005524">
    <property type="term" value="F:ATP binding"/>
    <property type="evidence" value="ECO:0007669"/>
    <property type="project" value="UniProtKB-KW"/>
</dbReference>
<dbReference type="GO" id="GO:0106310">
    <property type="term" value="F:protein serine kinase activity"/>
    <property type="evidence" value="ECO:0007669"/>
    <property type="project" value="RHEA"/>
</dbReference>
<dbReference type="GO" id="GO:0004674">
    <property type="term" value="F:protein serine/threonine kinase activity"/>
    <property type="evidence" value="ECO:0000318"/>
    <property type="project" value="GO_Central"/>
</dbReference>
<dbReference type="GO" id="GO:0004713">
    <property type="term" value="F:protein tyrosine kinase activity"/>
    <property type="evidence" value="ECO:0007669"/>
    <property type="project" value="UniProtKB-KW"/>
</dbReference>
<dbReference type="CDD" id="cd14003">
    <property type="entry name" value="STKc_AMPK-like"/>
    <property type="match status" value="1"/>
</dbReference>
<dbReference type="CDD" id="cd14337">
    <property type="entry name" value="UBA_MARK_Par1"/>
    <property type="match status" value="1"/>
</dbReference>
<dbReference type="FunFam" id="1.10.510.10:FF:000592">
    <property type="entry name" value="CAMK family protein kinase"/>
    <property type="match status" value="1"/>
</dbReference>
<dbReference type="FunFam" id="1.10.8.10:FF:000005">
    <property type="entry name" value="Non-specific serine/threonine protein kinase"/>
    <property type="match status" value="1"/>
</dbReference>
<dbReference type="FunFam" id="3.30.200.20:FF:000003">
    <property type="entry name" value="Non-specific serine/threonine protein kinase"/>
    <property type="match status" value="1"/>
</dbReference>
<dbReference type="Gene3D" id="1.10.8.10">
    <property type="entry name" value="DNA helicase RuvA subunit, C-terminal domain"/>
    <property type="match status" value="1"/>
</dbReference>
<dbReference type="Gene3D" id="3.30.200.20">
    <property type="entry name" value="Phosphorylase Kinase, domain 1"/>
    <property type="match status" value="1"/>
</dbReference>
<dbReference type="Gene3D" id="1.10.510.10">
    <property type="entry name" value="Transferase(Phosphotransferase) domain 1"/>
    <property type="match status" value="1"/>
</dbReference>
<dbReference type="InterPro" id="IPR011009">
    <property type="entry name" value="Kinase-like_dom_sf"/>
</dbReference>
<dbReference type="InterPro" id="IPR000719">
    <property type="entry name" value="Prot_kinase_dom"/>
</dbReference>
<dbReference type="InterPro" id="IPR008266">
    <property type="entry name" value="Tyr_kinase_AS"/>
</dbReference>
<dbReference type="PANTHER" id="PTHR24346">
    <property type="entry name" value="MAP/MICROTUBULE AFFINITY-REGULATING KINASE"/>
    <property type="match status" value="1"/>
</dbReference>
<dbReference type="PANTHER" id="PTHR24346:SF95">
    <property type="entry name" value="SPERM MOTILITY KINASE 3A"/>
    <property type="match status" value="1"/>
</dbReference>
<dbReference type="Pfam" id="PF00069">
    <property type="entry name" value="Pkinase"/>
    <property type="match status" value="1"/>
</dbReference>
<dbReference type="SUPFAM" id="SSF56112">
    <property type="entry name" value="Protein kinase-like (PK-like)"/>
    <property type="match status" value="1"/>
</dbReference>
<dbReference type="PROSITE" id="PS50011">
    <property type="entry name" value="PROTEIN_KINASE_DOM"/>
    <property type="match status" value="1"/>
</dbReference>
<dbReference type="PROSITE" id="PS00109">
    <property type="entry name" value="PROTEIN_KINASE_TYR"/>
    <property type="match status" value="1"/>
</dbReference>
<protein>
    <recommendedName>
        <fullName>Sperm motility kinase Tcr mutant form</fullName>
        <shortName>SmokTcr</shortName>
        <shortName>Tcr</shortName>
        <ecNumber>2.7.11.1</ecNumber>
    </recommendedName>
    <alternativeName>
        <fullName>Dominant negative form of Smok</fullName>
    </alternativeName>
    <alternativeName>
        <fullName>Responder protein Smok-Tcr</fullName>
    </alternativeName>
</protein>
<proteinExistence type="evidence at transcript level"/>
<organism>
    <name type="scientific">Mus musculus</name>
    <name type="common">Mouse</name>
    <dbReference type="NCBI Taxonomy" id="10090"/>
    <lineage>
        <taxon>Eukaryota</taxon>
        <taxon>Metazoa</taxon>
        <taxon>Chordata</taxon>
        <taxon>Craniata</taxon>
        <taxon>Vertebrata</taxon>
        <taxon>Euteleostomi</taxon>
        <taxon>Mammalia</taxon>
        <taxon>Eutheria</taxon>
        <taxon>Euarchontoglires</taxon>
        <taxon>Glires</taxon>
        <taxon>Rodentia</taxon>
        <taxon>Myomorpha</taxon>
        <taxon>Muroidea</taxon>
        <taxon>Muridae</taxon>
        <taxon>Murinae</taxon>
        <taxon>Mus</taxon>
        <taxon>Mus</taxon>
    </lineage>
</organism>
<comment type="function">
    <text evidence="4">While the main function of Smoks is to control sperm motility, the role of Smok-Tcr, with reduced kinase activity, is to counterbalance a signaling impairment caused by the distorter/sterility loci, giving t-sperm an advantage in reaching the oocytes. Transmission ratio distortion also called segregation distortion is the name given to the phenomenon above-mentioned. Being associated with the T-complex, it allows males heterozygous for a complete t-haplotype to preferentially transmit the t-haplotype chromosome.</text>
</comment>
<comment type="catalytic activity">
    <reaction>
        <text>L-seryl-[protein] + ATP = O-phospho-L-seryl-[protein] + ADP + H(+)</text>
        <dbReference type="Rhea" id="RHEA:17989"/>
        <dbReference type="Rhea" id="RHEA-COMP:9863"/>
        <dbReference type="Rhea" id="RHEA-COMP:11604"/>
        <dbReference type="ChEBI" id="CHEBI:15378"/>
        <dbReference type="ChEBI" id="CHEBI:29999"/>
        <dbReference type="ChEBI" id="CHEBI:30616"/>
        <dbReference type="ChEBI" id="CHEBI:83421"/>
        <dbReference type="ChEBI" id="CHEBI:456216"/>
        <dbReference type="EC" id="2.7.11.1"/>
    </reaction>
</comment>
<comment type="catalytic activity">
    <reaction>
        <text>L-threonyl-[protein] + ATP = O-phospho-L-threonyl-[protein] + ADP + H(+)</text>
        <dbReference type="Rhea" id="RHEA:46608"/>
        <dbReference type="Rhea" id="RHEA-COMP:11060"/>
        <dbReference type="Rhea" id="RHEA-COMP:11605"/>
        <dbReference type="ChEBI" id="CHEBI:15378"/>
        <dbReference type="ChEBI" id="CHEBI:30013"/>
        <dbReference type="ChEBI" id="CHEBI:30616"/>
        <dbReference type="ChEBI" id="CHEBI:61977"/>
        <dbReference type="ChEBI" id="CHEBI:456216"/>
        <dbReference type="EC" id="2.7.11.1"/>
    </reaction>
</comment>
<comment type="tissue specificity">
    <text evidence="4">Testis-specific. Expressed in the testis from 22 days postpartum (22 dpp). Expressed late in spermiogenesis, only in Tcr-containing t-haplotypes.</text>
</comment>
<comment type="miscellaneous">
    <text>Encoded on the T-complex, a region of 20-30 Mb on proximal third of mouse chromosome 17. Naturally occurring variant forms of the T-complex, known as complete t-haplotypes, are found in wild mouse populations. The t-haplotypes contain at least four nonoverlapping inversions that suppress recombination with the wild-type chromosome, and lock into strong linkage disequilibrium loci affecting normal transmission of the chromosome, male gametogenesis and embryonic development.</text>
</comment>
<comment type="miscellaneous">
    <text>T6 allele.</text>
</comment>
<comment type="similarity">
    <text evidence="1">Belongs to the protein kinase superfamily. Tyr protein kinase family. Smok subfamily.</text>
</comment>
<comment type="caution">
    <text evidence="5">Although it is derived from a rearrangement with the neighboring RSK3 gene, it plays a crucial role in t-haplotype cells.</text>
</comment>
<feature type="chain" id="PRO_0000307873" description="Sperm motility kinase Tcr mutant form">
    <location>
        <begin position="1"/>
        <end position="484"/>
    </location>
</feature>
<feature type="domain" description="Protein kinase" evidence="1">
    <location>
        <begin position="8"/>
        <end position="256"/>
    </location>
</feature>
<feature type="region of interest" description="Disordered" evidence="3">
    <location>
        <begin position="355"/>
        <end position="400"/>
    </location>
</feature>
<feature type="region of interest" description="Disordered" evidence="3">
    <location>
        <begin position="426"/>
        <end position="446"/>
    </location>
</feature>
<feature type="compositionally biased region" description="Polar residues" evidence="3">
    <location>
        <begin position="391"/>
        <end position="400"/>
    </location>
</feature>
<feature type="active site" description="Proton acceptor" evidence="1 2">
    <location>
        <position position="127"/>
    </location>
</feature>
<feature type="binding site" evidence="1">
    <location>
        <begin position="14"/>
        <end position="22"/>
    </location>
    <ligand>
        <name>ATP</name>
        <dbReference type="ChEBI" id="CHEBI:30616"/>
    </ligand>
</feature>
<feature type="binding site" evidence="1">
    <location>
        <position position="37"/>
    </location>
    <ligand>
        <name>ATP</name>
        <dbReference type="ChEBI" id="CHEBI:30616"/>
    </ligand>
</feature>
<keyword id="KW-0067">ATP-binding</keyword>
<keyword id="KW-0418">Kinase</keyword>
<keyword id="KW-0547">Nucleotide-binding</keyword>
<keyword id="KW-1185">Reference proteome</keyword>
<keyword id="KW-0723">Serine/threonine-protein kinase</keyword>
<keyword id="KW-0808">Transferase</keyword>
<keyword id="KW-0829">Tyrosine-protein kinase</keyword>
<name>SMKTR_MOUSE</name>
<evidence type="ECO:0000255" key="1">
    <source>
        <dbReference type="PROSITE-ProRule" id="PRU00159"/>
    </source>
</evidence>
<evidence type="ECO:0000255" key="2">
    <source>
        <dbReference type="PROSITE-ProRule" id="PRU10028"/>
    </source>
</evidence>
<evidence type="ECO:0000256" key="3">
    <source>
        <dbReference type="SAM" id="MobiDB-lite"/>
    </source>
</evidence>
<evidence type="ECO:0000269" key="4">
    <source>
    </source>
</evidence>
<evidence type="ECO:0000305" key="5"/>
<accession>A2KF29</accession>
<gene>
    <name type="primary">Smoktcr</name>
</gene>
<sequence length="484" mass="54619">MEKFHAQYEMLETIGQGGCAQVKLARHRLTGTHVAVKVIVKRECWFNPVMSEAELLMMTDHPNIISLLQVIETKKKVYLIMELCEGKSLYQHIQNAGYLQEDEARPLFKQLLSAMNYCHNQGIVHRDLTPDNIMVEKDGKVKIIDFGLGTQEKPGQNHNLFCEIYPFSTPEVLFNRPYDMRKIDVWGLGVVLYFMVTGKILFDTASVEKLRKQIVAEKCSVPCRLSVELQDLIRLLMTDIPELRPTVAEVMVHPWVTEGSGVLPDPCEEHIPLKPDPAIAKAMGFIGFQAQDIEDSLCQRKFNETMASYCLLKKQILKECDRPIRAQPMNPSVTPLSSLVDAPTFHLGLRRTETEPTGLRLSDNKEVPVCGNSTSKKRERSFSGPGVLSRPINTTPTMDQTHTRTWSGPCIYSNVCTIHPNSINESTEGHISTSAEDKPVHSRGWPRGIKGWTRKIGNAMRKLCCCIPSKETSHLGQRRVCPKI</sequence>